<accession>Q55BX3</accession>
<gene>
    <name type="ORF">DDB_G0270324</name>
</gene>
<reference key="1">
    <citation type="journal article" date="2005" name="Nature">
        <title>The genome of the social amoeba Dictyostelium discoideum.</title>
        <authorList>
            <person name="Eichinger L."/>
            <person name="Pachebat J.A."/>
            <person name="Gloeckner G."/>
            <person name="Rajandream M.A."/>
            <person name="Sucgang R."/>
            <person name="Berriman M."/>
            <person name="Song J."/>
            <person name="Olsen R."/>
            <person name="Szafranski K."/>
            <person name="Xu Q."/>
            <person name="Tunggal B."/>
            <person name="Kummerfeld S."/>
            <person name="Madera M."/>
            <person name="Konfortov B.A."/>
            <person name="Rivero F."/>
            <person name="Bankier A.T."/>
            <person name="Lehmann R."/>
            <person name="Hamlin N."/>
            <person name="Davies R."/>
            <person name="Gaudet P."/>
            <person name="Fey P."/>
            <person name="Pilcher K."/>
            <person name="Chen G."/>
            <person name="Saunders D."/>
            <person name="Sodergren E.J."/>
            <person name="Davis P."/>
            <person name="Kerhornou A."/>
            <person name="Nie X."/>
            <person name="Hall N."/>
            <person name="Anjard C."/>
            <person name="Hemphill L."/>
            <person name="Bason N."/>
            <person name="Farbrother P."/>
            <person name="Desany B."/>
            <person name="Just E."/>
            <person name="Morio T."/>
            <person name="Rost R."/>
            <person name="Churcher C.M."/>
            <person name="Cooper J."/>
            <person name="Haydock S."/>
            <person name="van Driessche N."/>
            <person name="Cronin A."/>
            <person name="Goodhead I."/>
            <person name="Muzny D.M."/>
            <person name="Mourier T."/>
            <person name="Pain A."/>
            <person name="Lu M."/>
            <person name="Harper D."/>
            <person name="Lindsay R."/>
            <person name="Hauser H."/>
            <person name="James K.D."/>
            <person name="Quiles M."/>
            <person name="Madan Babu M."/>
            <person name="Saito T."/>
            <person name="Buchrieser C."/>
            <person name="Wardroper A."/>
            <person name="Felder M."/>
            <person name="Thangavelu M."/>
            <person name="Johnson D."/>
            <person name="Knights A."/>
            <person name="Loulseged H."/>
            <person name="Mungall K.L."/>
            <person name="Oliver K."/>
            <person name="Price C."/>
            <person name="Quail M.A."/>
            <person name="Urushihara H."/>
            <person name="Hernandez J."/>
            <person name="Rabbinowitsch E."/>
            <person name="Steffen D."/>
            <person name="Sanders M."/>
            <person name="Ma J."/>
            <person name="Kohara Y."/>
            <person name="Sharp S."/>
            <person name="Simmonds M.N."/>
            <person name="Spiegler S."/>
            <person name="Tivey A."/>
            <person name="Sugano S."/>
            <person name="White B."/>
            <person name="Walker D."/>
            <person name="Woodward J.R."/>
            <person name="Winckler T."/>
            <person name="Tanaka Y."/>
            <person name="Shaulsky G."/>
            <person name="Schleicher M."/>
            <person name="Weinstock G.M."/>
            <person name="Rosenthal A."/>
            <person name="Cox E.C."/>
            <person name="Chisholm R.L."/>
            <person name="Gibbs R.A."/>
            <person name="Loomis W.F."/>
            <person name="Platzer M."/>
            <person name="Kay R.R."/>
            <person name="Williams J.G."/>
            <person name="Dear P.H."/>
            <person name="Noegel A.A."/>
            <person name="Barrell B.G."/>
            <person name="Kuspa A."/>
        </authorList>
    </citation>
    <scope>NUCLEOTIDE SEQUENCE [LARGE SCALE GENOMIC DNA]</scope>
    <source>
        <strain>AX4</strain>
    </source>
</reference>
<evidence type="ECO:0000305" key="1"/>
<keyword id="KW-1185">Reference proteome</keyword>
<comment type="similarity">
    <text evidence="1">Belongs to the NDRG family.</text>
</comment>
<protein>
    <recommendedName>
        <fullName>NDRG-like protein</fullName>
    </recommendedName>
</protein>
<sequence>MSSLNKSIGSVTESPINVVVHNYDNNDPTETRHEVQTKHGKLVCFQKIGSNQSPNMPTIISYHDLGLNHTTCFSPFFNHPNMNHILPYLNIIHIEAPGHEFNAETIPSSQYPSITEMAEDIQYVLDYFKVKVFIGLGAGAGGCILTQYSIFYPRSVVGLVLVGSVIKSFSWLDWVKSWVELTTLPSLKNPTGVRKYLIDHYYADNLEETNPDLLEIIKKEMVLINPDNLYHYVHSFVKRDDIKEEQIKALGCKILLVVGKDSTYKEDIIDLFSQFNPRNSTILQVPDCGILVTAEKPGDIVEPFKLFMQGIGFLLDYYQSHDDAQK</sequence>
<proteinExistence type="inferred from homology"/>
<organism>
    <name type="scientific">Dictyostelium discoideum</name>
    <name type="common">Social amoeba</name>
    <dbReference type="NCBI Taxonomy" id="44689"/>
    <lineage>
        <taxon>Eukaryota</taxon>
        <taxon>Amoebozoa</taxon>
        <taxon>Evosea</taxon>
        <taxon>Eumycetozoa</taxon>
        <taxon>Dictyostelia</taxon>
        <taxon>Dictyosteliales</taxon>
        <taxon>Dictyosteliaceae</taxon>
        <taxon>Dictyostelium</taxon>
    </lineage>
</organism>
<name>NDRG_DICDI</name>
<dbReference type="EMBL" id="AAFI02000005">
    <property type="protein sequence ID" value="EAL72512.1"/>
    <property type="molecule type" value="Genomic_DNA"/>
</dbReference>
<dbReference type="RefSeq" id="XP_646708.1">
    <property type="nucleotide sequence ID" value="XM_641616.1"/>
</dbReference>
<dbReference type="SMR" id="Q55BX3"/>
<dbReference type="FunCoup" id="Q55BX3">
    <property type="interactions" value="1"/>
</dbReference>
<dbReference type="STRING" id="44689.Q55BX3"/>
<dbReference type="ESTHER" id="dicdi-q55bx3">
    <property type="family name" value="Ndr_family"/>
</dbReference>
<dbReference type="PaxDb" id="44689-DDB0238670"/>
<dbReference type="EnsemblProtists" id="EAL72512">
    <property type="protein sequence ID" value="EAL72512"/>
    <property type="gene ID" value="DDB_G0270324"/>
</dbReference>
<dbReference type="GeneID" id="8617682"/>
<dbReference type="KEGG" id="ddi:DDB_G0270324"/>
<dbReference type="dictyBase" id="DDB_G0270324"/>
<dbReference type="VEuPathDB" id="AmoebaDB:DDB_G0270324"/>
<dbReference type="eggNOG" id="KOG2931">
    <property type="taxonomic scope" value="Eukaryota"/>
</dbReference>
<dbReference type="HOGENOM" id="CLU_035361_1_0_1"/>
<dbReference type="InParanoid" id="Q55BX3"/>
<dbReference type="OMA" id="EHPPDFE"/>
<dbReference type="PhylomeDB" id="Q55BX3"/>
<dbReference type="PRO" id="PR:Q55BX3"/>
<dbReference type="Proteomes" id="UP000002195">
    <property type="component" value="Chromosome 1"/>
</dbReference>
<dbReference type="Gene3D" id="3.40.50.1820">
    <property type="entry name" value="alpha/beta hydrolase"/>
    <property type="match status" value="1"/>
</dbReference>
<dbReference type="InterPro" id="IPR029058">
    <property type="entry name" value="AB_hydrolase_fold"/>
</dbReference>
<dbReference type="InterPro" id="IPR004142">
    <property type="entry name" value="NDRG"/>
</dbReference>
<dbReference type="PANTHER" id="PTHR11034">
    <property type="entry name" value="N-MYC DOWNSTREAM REGULATED"/>
    <property type="match status" value="1"/>
</dbReference>
<dbReference type="Pfam" id="PF03096">
    <property type="entry name" value="Ndr"/>
    <property type="match status" value="1"/>
</dbReference>
<dbReference type="SUPFAM" id="SSF53474">
    <property type="entry name" value="alpha/beta-Hydrolases"/>
    <property type="match status" value="1"/>
</dbReference>
<feature type="chain" id="PRO_0000331375" description="NDRG-like protein">
    <location>
        <begin position="1"/>
        <end position="326"/>
    </location>
</feature>